<organism>
    <name type="scientific">Oryza sativa subsp. japonica</name>
    <name type="common">Rice</name>
    <dbReference type="NCBI Taxonomy" id="39947"/>
    <lineage>
        <taxon>Eukaryota</taxon>
        <taxon>Viridiplantae</taxon>
        <taxon>Streptophyta</taxon>
        <taxon>Embryophyta</taxon>
        <taxon>Tracheophyta</taxon>
        <taxon>Spermatophyta</taxon>
        <taxon>Magnoliopsida</taxon>
        <taxon>Liliopsida</taxon>
        <taxon>Poales</taxon>
        <taxon>Poaceae</taxon>
        <taxon>BOP clade</taxon>
        <taxon>Oryzoideae</taxon>
        <taxon>Oryzeae</taxon>
        <taxon>Oryzinae</taxon>
        <taxon>Oryza</taxon>
        <taxon>Oryza sativa</taxon>
    </lineage>
</organism>
<proteinExistence type="evidence at transcript level"/>
<comment type="function">
    <text evidence="3 4 5 6 7 8 9 10">Transcription factor involved in the regulation of tiller bud outgrowth, but does not seem to regulate tiller bud initiation (PubMed:17888111). Possesses transactivation activity in yeast (PubMed:17888111). Involved in the regulation of plant architecture and grain yield (PubMed:29365136). Acts as a negative regulator of plant height and flowering time (PubMed:25754802). Regulates directly key genes of the gibberellin (GA) pathway by binding to their promoters (PubMed:25754802). Positively regulates leaf senescence in an age-dependent manner (PubMed:28500268). Activates directly the expression of the chlorophyll degradation genes SGR and NYC3 (PubMed:28500268). Positively regulates the level of abscisic acid (ABA) by directly up-regulating the expression of the ABA biosynthetic genes NCED3 and ZEP, and down-regulating the ABA catabolic gene CYP707A5/ABA8OX1 (PubMed:28500268). Promotes salt-induced cell death accompanied by the loss of plasma membrane integrity, nuclear DNA fragmentation, and changes of caspase-like activity (PubMed:29436050). Targets genes that encoded a reactive oxygen species (ROS) scavenger COX11 and a caspase-like protease AP37 (PubMed:29436050). Activates the potassium efflux channels GORK and SKOR (PubMed:29436050). Acts as a positive regulator of drought and salt tolerance through ABA-mediated pathways (PubMed:31637532). Acts as a negative regulator of root growth (PubMed:31389120). Functions as an upstream integrator of auxin and cytokinin signals that affect CROWN ROOTLESS (CRL) and cyclin-dependent protein kinase (CDK) genes to regulate cell division during root development (PubMed:31389120). Binds directly to the promoters of the auxin inactivation-related genes GH3.6 and GH3.8, the auxin signaling-related gene ARF25, and the cytokinin oxidase gene CKX4 (PubMed:31389120). Activates directly the expressions of the 1-aminocyclopropane-1-carboxylate oxidase genes ACO1 and ACO3, enhancing ethylene synthesis, and then retarding seedling establishment (PubMed:34367219).</text>
</comment>
<comment type="subcellular location">
    <subcellularLocation>
        <location evidence="1 3 4 6">Nucleus</location>
    </subcellularLocation>
</comment>
<comment type="tissue specificity">
    <text evidence="3 4">Expressed in roots, tiller buds, stems, leaves, lamina joints and the young husks (PubMed:17888111). Expressed in embryos, coleoptiles, radicles, leaf pulvinus, ligules, panicles, palea and lemma, anthers, and the internode of the peduncles (PubMed:25754802). Expressed in young leaves, root meristems, florescence meristems and young spikelets (PubMed:25754802).</text>
</comment>
<comment type="developmental stage">
    <text evidence="8">In 5-day-old seedling, expressed in the maturation zone of roots, and later in the whole root tip. In 9- to 13-day-old plants, expressed mainly in the elongation zone of roots. In 14-day-old plants, expressed in the whole root tip, the apex and base of lateral roots, the lateral root primordia and crown roots.</text>
</comment>
<comment type="induction">
    <text evidence="5 7">Up-regulated during leaf senescence (PubMed:28500268). Induced by salt stress (PubMed:29436050).</text>
</comment>
<comment type="domain">
    <text evidence="1">The NAC domain includes a DNA binding domain and a dimerization domain.</text>
</comment>
<comment type="miscellaneous">
    <text evidence="3 4 5">The gain-of-function mutant plants Ostil1 (T-DNA activation tagging) exhibit increased tiller number, enlarged tiller angle and semidwarf phenotype (PubMed:17888111). Overexpression of NAC4 shortens plant height (PubMed:25754802). Plants overexpressing NAC4 exhibit early leaf senescence (PubMed:28500268).</text>
</comment>
<comment type="sequence caution" evidence="13">
    <conflict type="erroneous initiation">
        <sequence resource="EMBL-CDS" id="BAC53811"/>
    </conflict>
    <text>Truncated N-terminus.</text>
</comment>
<name>NAC4_ORYSJ</name>
<accession>Q7XUV6</accession>
<accession>B9FFJ4</accession>
<accession>Q1G0X7</accession>
<accession>Q8H0I4</accession>
<keyword id="KW-0938">Abscisic acid signaling pathway</keyword>
<keyword id="KW-0927">Auxin signaling pathway</keyword>
<keyword id="KW-0238">DNA-binding</keyword>
<keyword id="KW-0936">Ethylene signaling pathway</keyword>
<keyword id="KW-0939">Gibberellin signaling pathway</keyword>
<keyword id="KW-0539">Nucleus</keyword>
<keyword id="KW-1185">Reference proteome</keyword>
<keyword id="KW-0804">Transcription</keyword>
<keyword id="KW-0805">Transcription regulation</keyword>
<feature type="chain" id="PRO_0000456287" description="NAC domain-containing protein 4">
    <location>
        <begin position="1"/>
        <end position="343"/>
    </location>
</feature>
<feature type="domain" description="NAC" evidence="1">
    <location>
        <begin position="12"/>
        <end position="168"/>
    </location>
</feature>
<feature type="DNA-binding region" evidence="1">
    <location>
        <begin position="109"/>
        <end position="174"/>
    </location>
</feature>
<feature type="region of interest" description="Disordered" evidence="2">
    <location>
        <begin position="304"/>
        <end position="333"/>
    </location>
</feature>
<feature type="compositionally biased region" description="Polar residues" evidence="2">
    <location>
        <begin position="311"/>
        <end position="332"/>
    </location>
</feature>
<reference key="1">
    <citation type="submission" date="1999-05" db="EMBL/GenBank/DDBJ databases">
        <title>Molecular analysis of the NAC gene in rice.</title>
        <authorList>
            <person name="Hirano H."/>
        </authorList>
    </citation>
    <scope>NUCLEOTIDE SEQUENCE [MRNA]</scope>
</reference>
<reference key="2">
    <citation type="journal article" date="2007" name="New Phytol.">
        <title>Overexpression of a NAC-domain protein promotes shoot branching in rice.</title>
        <authorList>
            <person name="Mao C."/>
            <person name="Ding W."/>
            <person name="Wu Y."/>
            <person name="Yu J."/>
            <person name="He X."/>
            <person name="Shou H."/>
            <person name="Wu P."/>
        </authorList>
    </citation>
    <scope>NUCLEOTIDE SEQUENCE [MRNA]</scope>
    <scope>FUNCTION</scope>
    <scope>TISSUE SPECIFICITY</scope>
</reference>
<reference key="3">
    <citation type="journal article" date="2002" name="Nature">
        <title>Sequence and analysis of rice chromosome 4.</title>
        <authorList>
            <person name="Feng Q."/>
            <person name="Zhang Y."/>
            <person name="Hao P."/>
            <person name="Wang S."/>
            <person name="Fu G."/>
            <person name="Huang Y."/>
            <person name="Li Y."/>
            <person name="Zhu J."/>
            <person name="Liu Y."/>
            <person name="Hu X."/>
            <person name="Jia P."/>
            <person name="Zhang Y."/>
            <person name="Zhao Q."/>
            <person name="Ying K."/>
            <person name="Yu S."/>
            <person name="Tang Y."/>
            <person name="Weng Q."/>
            <person name="Zhang L."/>
            <person name="Lu Y."/>
            <person name="Mu J."/>
            <person name="Lu Y."/>
            <person name="Zhang L.S."/>
            <person name="Yu Z."/>
            <person name="Fan D."/>
            <person name="Liu X."/>
            <person name="Lu T."/>
            <person name="Li C."/>
            <person name="Wu Y."/>
            <person name="Sun T."/>
            <person name="Lei H."/>
            <person name="Li T."/>
            <person name="Hu H."/>
            <person name="Guan J."/>
            <person name="Wu M."/>
            <person name="Zhang R."/>
            <person name="Zhou B."/>
            <person name="Chen Z."/>
            <person name="Chen L."/>
            <person name="Jin Z."/>
            <person name="Wang R."/>
            <person name="Yin H."/>
            <person name="Cai Z."/>
            <person name="Ren S."/>
            <person name="Lv G."/>
            <person name="Gu W."/>
            <person name="Zhu G."/>
            <person name="Tu Y."/>
            <person name="Jia J."/>
            <person name="Zhang Y."/>
            <person name="Chen J."/>
            <person name="Kang H."/>
            <person name="Chen X."/>
            <person name="Shao C."/>
            <person name="Sun Y."/>
            <person name="Hu Q."/>
            <person name="Zhang X."/>
            <person name="Zhang W."/>
            <person name="Wang L."/>
            <person name="Ding C."/>
            <person name="Sheng H."/>
            <person name="Gu J."/>
            <person name="Chen S."/>
            <person name="Ni L."/>
            <person name="Zhu F."/>
            <person name="Chen W."/>
            <person name="Lan L."/>
            <person name="Lai Y."/>
            <person name="Cheng Z."/>
            <person name="Gu M."/>
            <person name="Jiang J."/>
            <person name="Li J."/>
            <person name="Hong G."/>
            <person name="Xue Y."/>
            <person name="Han B."/>
        </authorList>
    </citation>
    <scope>NUCLEOTIDE SEQUENCE [LARGE SCALE GENOMIC DNA]</scope>
    <source>
        <strain>cv. Nipponbare</strain>
    </source>
</reference>
<reference key="4">
    <citation type="journal article" date="2005" name="Nature">
        <title>The map-based sequence of the rice genome.</title>
        <authorList>
            <consortium name="International rice genome sequencing project (IRGSP)"/>
        </authorList>
    </citation>
    <scope>NUCLEOTIDE SEQUENCE [LARGE SCALE GENOMIC DNA]</scope>
    <source>
        <strain>cv. Nipponbare</strain>
    </source>
</reference>
<reference key="5">
    <citation type="journal article" date="2008" name="Nucleic Acids Res.">
        <title>The rice annotation project database (RAP-DB): 2008 update.</title>
        <authorList>
            <consortium name="The rice annotation project (RAP)"/>
        </authorList>
    </citation>
    <scope>GENOME REANNOTATION</scope>
    <source>
        <strain>cv. Nipponbare</strain>
    </source>
</reference>
<reference key="6">
    <citation type="journal article" date="2013" name="Rice">
        <title>Improvement of the Oryza sativa Nipponbare reference genome using next generation sequence and optical map data.</title>
        <authorList>
            <person name="Kawahara Y."/>
            <person name="de la Bastide M."/>
            <person name="Hamilton J.P."/>
            <person name="Kanamori H."/>
            <person name="McCombie W.R."/>
            <person name="Ouyang S."/>
            <person name="Schwartz D.C."/>
            <person name="Tanaka T."/>
            <person name="Wu J."/>
            <person name="Zhou S."/>
            <person name="Childs K.L."/>
            <person name="Davidson R.M."/>
            <person name="Lin H."/>
            <person name="Quesada-Ocampo L."/>
            <person name="Vaillancourt B."/>
            <person name="Sakai H."/>
            <person name="Lee S.S."/>
            <person name="Kim J."/>
            <person name="Numa H."/>
            <person name="Itoh T."/>
            <person name="Buell C.R."/>
            <person name="Matsumoto T."/>
        </authorList>
    </citation>
    <scope>GENOME REANNOTATION</scope>
    <source>
        <strain>cv. Nipponbare</strain>
    </source>
</reference>
<reference key="7">
    <citation type="journal article" date="2005" name="PLoS Biol.">
        <title>The genomes of Oryza sativa: a history of duplications.</title>
        <authorList>
            <person name="Yu J."/>
            <person name="Wang J."/>
            <person name="Lin W."/>
            <person name="Li S."/>
            <person name="Li H."/>
            <person name="Zhou J."/>
            <person name="Ni P."/>
            <person name="Dong W."/>
            <person name="Hu S."/>
            <person name="Zeng C."/>
            <person name="Zhang J."/>
            <person name="Zhang Y."/>
            <person name="Li R."/>
            <person name="Xu Z."/>
            <person name="Li S."/>
            <person name="Li X."/>
            <person name="Zheng H."/>
            <person name="Cong L."/>
            <person name="Lin L."/>
            <person name="Yin J."/>
            <person name="Geng J."/>
            <person name="Li G."/>
            <person name="Shi J."/>
            <person name="Liu J."/>
            <person name="Lv H."/>
            <person name="Li J."/>
            <person name="Wang J."/>
            <person name="Deng Y."/>
            <person name="Ran L."/>
            <person name="Shi X."/>
            <person name="Wang X."/>
            <person name="Wu Q."/>
            <person name="Li C."/>
            <person name="Ren X."/>
            <person name="Wang J."/>
            <person name="Wang X."/>
            <person name="Li D."/>
            <person name="Liu D."/>
            <person name="Zhang X."/>
            <person name="Ji Z."/>
            <person name="Zhao W."/>
            <person name="Sun Y."/>
            <person name="Zhang Z."/>
            <person name="Bao J."/>
            <person name="Han Y."/>
            <person name="Dong L."/>
            <person name="Ji J."/>
            <person name="Chen P."/>
            <person name="Wu S."/>
            <person name="Liu J."/>
            <person name="Xiao Y."/>
            <person name="Bu D."/>
            <person name="Tan J."/>
            <person name="Yang L."/>
            <person name="Ye C."/>
            <person name="Zhang J."/>
            <person name="Xu J."/>
            <person name="Zhou Y."/>
            <person name="Yu Y."/>
            <person name="Zhang B."/>
            <person name="Zhuang S."/>
            <person name="Wei H."/>
            <person name="Liu B."/>
            <person name="Lei M."/>
            <person name="Yu H."/>
            <person name="Li Y."/>
            <person name="Xu H."/>
            <person name="Wei S."/>
            <person name="He X."/>
            <person name="Fang L."/>
            <person name="Zhang Z."/>
            <person name="Zhang Y."/>
            <person name="Huang X."/>
            <person name="Su Z."/>
            <person name="Tong W."/>
            <person name="Li J."/>
            <person name="Tong Z."/>
            <person name="Li S."/>
            <person name="Ye J."/>
            <person name="Wang L."/>
            <person name="Fang L."/>
            <person name="Lei T."/>
            <person name="Chen C.-S."/>
            <person name="Chen H.-C."/>
            <person name="Xu Z."/>
            <person name="Li H."/>
            <person name="Huang H."/>
            <person name="Zhang F."/>
            <person name="Xu H."/>
            <person name="Li N."/>
            <person name="Zhao C."/>
            <person name="Li S."/>
            <person name="Dong L."/>
            <person name="Huang Y."/>
            <person name="Li L."/>
            <person name="Xi Y."/>
            <person name="Qi Q."/>
            <person name="Li W."/>
            <person name="Zhang B."/>
            <person name="Hu W."/>
            <person name="Zhang Y."/>
            <person name="Tian X."/>
            <person name="Jiao Y."/>
            <person name="Liang X."/>
            <person name="Jin J."/>
            <person name="Gao L."/>
            <person name="Zheng W."/>
            <person name="Hao B."/>
            <person name="Liu S.-M."/>
            <person name="Wang W."/>
            <person name="Yuan L."/>
            <person name="Cao M."/>
            <person name="McDermott J."/>
            <person name="Samudrala R."/>
            <person name="Wang J."/>
            <person name="Wong G.K.-S."/>
            <person name="Yang H."/>
        </authorList>
    </citation>
    <scope>NUCLEOTIDE SEQUENCE [LARGE SCALE GENOMIC DNA]</scope>
    <source>
        <strain>cv. Nipponbare</strain>
    </source>
</reference>
<reference key="8">
    <citation type="journal article" date="2003" name="Science">
        <title>Collection, mapping, and annotation of over 28,000 cDNA clones from japonica rice.</title>
        <authorList>
            <consortium name="The rice full-length cDNA consortium"/>
        </authorList>
    </citation>
    <scope>NUCLEOTIDE SEQUENCE [LARGE SCALE MRNA]</scope>
    <source>
        <strain>cv. Nipponbare</strain>
    </source>
</reference>
<reference key="9">
    <citation type="journal article" date="2008" name="Mol. Genet. Genomics">
        <title>Systematic sequence analysis and identification of tissue-specific or stress-responsive genes of NAC transcription factor family in rice.</title>
        <authorList>
            <person name="Fang Y."/>
            <person name="You J."/>
            <person name="Xie K."/>
            <person name="Xie W."/>
            <person name="Xiong L."/>
        </authorList>
    </citation>
    <scope>GENE FAMILY</scope>
    <scope>NOMENCLATURE</scope>
</reference>
<reference key="10">
    <citation type="journal article" date="2015" name="Plant J.">
        <title>OsNAC2 encoding a NAC transcription factor that affects plant height through mediating the gibberellic acid pathway in rice.</title>
        <authorList>
            <person name="Chen X."/>
            <person name="Lu S."/>
            <person name="Wang Y."/>
            <person name="Zhang X."/>
            <person name="Lv B."/>
            <person name="Luo L."/>
            <person name="Xi D."/>
            <person name="Shen J."/>
            <person name="Ma H."/>
            <person name="Ming F."/>
        </authorList>
    </citation>
    <scope>FUNCTION</scope>
    <scope>SUBCELLULAR LOCATION</scope>
    <scope>TISSUE SPECIFICITY</scope>
</reference>
<reference key="11">
    <citation type="journal article" date="2017" name="Plant Physiol.">
        <title>A rice NAC transcription factor promotes leaf senescence via ABA biosynthesis.</title>
        <authorList>
            <person name="Mao C."/>
            <person name="Lu S."/>
            <person name="Lv B."/>
            <person name="Zhang B."/>
            <person name="Shen J."/>
            <person name="He J."/>
            <person name="Luo L."/>
            <person name="Xi D."/>
            <person name="Chen X."/>
            <person name="Ming F."/>
        </authorList>
    </citation>
    <scope>FUNCTION</scope>
    <scope>INDUCTION BY SENESCENCE</scope>
</reference>
<reference key="12">
    <citation type="journal article" date="2018" name="Plant J.">
        <title>OsNAC2 positively affects salt-induced cell death and binds to the OsAP37 and OsCOX11 promoters.</title>
        <authorList>
            <person name="Mao C."/>
            <person name="Ding J."/>
            <person name="Zhang B."/>
            <person name="Xi D."/>
            <person name="Ming F."/>
        </authorList>
    </citation>
    <scope>FUNCTION</scope>
    <scope>INDUCTION BY SALT STRESS</scope>
</reference>
<reference key="13">
    <citation type="journal article" date="2018" name="J. Exp. Bot.">
        <title>Overexpression of miR164b-resistant OsNAC2 improves plant architecture and grain yield in rice.</title>
        <authorList>
            <person name="Jiang D."/>
            <person name="Chen W."/>
            <person name="Dong J."/>
            <person name="Li J."/>
            <person name="Yang F."/>
            <person name="Wu Z."/>
            <person name="Zhou H."/>
            <person name="Wang W."/>
            <person name="Zhuang C."/>
        </authorList>
    </citation>
    <scope>FUNCTION</scope>
    <scope>SUBCELLULAR LOCATION</scope>
</reference>
<reference key="14">
    <citation type="journal article" date="2019" name="Rice">
        <title>Overexpression of a microRNA-targeted NAC transcription factor improves drought and salt tolerance in rice via ABA-mediated pathways.</title>
        <authorList>
            <person name="Jiang D."/>
            <person name="Zhou L."/>
            <person name="Chen W."/>
            <person name="Ye N."/>
            <person name="Xia J."/>
            <person name="Zhuang C."/>
        </authorList>
    </citation>
    <scope>FUNCTION</scope>
</reference>
<reference key="15">
    <citation type="journal article" date="2020" name="Plant Biotechnol. J.">
        <title>OsNAC2 integrates auxin and cytokinin pathways to modulate rice root development.</title>
        <authorList>
            <person name="Mao C."/>
            <person name="He J."/>
            <person name="Liu L."/>
            <person name="Deng Q."/>
            <person name="Yao X."/>
            <person name="Liu C."/>
            <person name="Qiao Y."/>
            <person name="Li P."/>
            <person name="Ming F."/>
        </authorList>
    </citation>
    <scope>FUNCTION</scope>
    <scope>DEVELOPMENTAL STAGE</scope>
</reference>
<reference key="16">
    <citation type="journal article" date="2021" name="Front. Plant Sci.">
        <title>OsNAC2 is involved in multiple hormonal pathways to mediate germination of rice seeds and establishment of seedling.</title>
        <authorList>
            <person name="Yu J."/>
            <person name="Mao C."/>
            <person name="Zhong Q."/>
            <person name="Yao X."/>
            <person name="Li P."/>
            <person name="Liu C."/>
            <person name="Ming F."/>
        </authorList>
    </citation>
    <scope>FUNCTION</scope>
</reference>
<dbReference type="EMBL" id="AB028181">
    <property type="protein sequence ID" value="BAC53811.1"/>
    <property type="status" value="ALT_INIT"/>
    <property type="molecule type" value="mRNA"/>
</dbReference>
<dbReference type="EMBL" id="DQ520641">
    <property type="protein sequence ID" value="ABF47345.2"/>
    <property type="molecule type" value="mRNA"/>
</dbReference>
<dbReference type="EMBL" id="AL606460">
    <property type="protein sequence ID" value="CAD40985.2"/>
    <property type="molecule type" value="Genomic_DNA"/>
</dbReference>
<dbReference type="EMBL" id="AP008210">
    <property type="protein sequence ID" value="BAF14906.1"/>
    <property type="molecule type" value="Genomic_DNA"/>
</dbReference>
<dbReference type="EMBL" id="AP014960">
    <property type="protein sequence ID" value="BAS89546.1"/>
    <property type="molecule type" value="Genomic_DNA"/>
</dbReference>
<dbReference type="EMBL" id="CM000141">
    <property type="protein sequence ID" value="EEE61128.1"/>
    <property type="molecule type" value="Genomic_DNA"/>
</dbReference>
<dbReference type="EMBL" id="AK061745">
    <property type="protein sequence ID" value="BAG88085.1"/>
    <property type="molecule type" value="mRNA"/>
</dbReference>
<dbReference type="EMBL" id="AK104626">
    <property type="protein sequence ID" value="BAG96845.1"/>
    <property type="molecule type" value="mRNA"/>
</dbReference>
<dbReference type="RefSeq" id="XP_015633922.1">
    <property type="nucleotide sequence ID" value="XM_015778436.1"/>
</dbReference>
<dbReference type="RefSeq" id="XP_015633924.1">
    <property type="nucleotide sequence ID" value="XM_015778438.1"/>
</dbReference>
<dbReference type="SMR" id="Q7XUV6"/>
<dbReference type="FunCoup" id="Q7XUV6">
    <property type="interactions" value="478"/>
</dbReference>
<dbReference type="STRING" id="39947.Q7XUV6"/>
<dbReference type="PaxDb" id="39947-Q7XUV6"/>
<dbReference type="EnsemblPlants" id="Os04t0460600-02">
    <property type="protein sequence ID" value="Os04t0460600-02"/>
    <property type="gene ID" value="Os04g0460600"/>
</dbReference>
<dbReference type="GeneID" id="4336052"/>
<dbReference type="Gramene" id="Os04t0460600-02">
    <property type="protein sequence ID" value="Os04t0460600-02"/>
    <property type="gene ID" value="Os04g0460600"/>
</dbReference>
<dbReference type="KEGG" id="dosa:Os04g0460600"/>
<dbReference type="KEGG" id="osa:4336052"/>
<dbReference type="eggNOG" id="ENOG502QR2M">
    <property type="taxonomic scope" value="Eukaryota"/>
</dbReference>
<dbReference type="HOGENOM" id="CLU_035664_6_1_1"/>
<dbReference type="InParanoid" id="Q7XUV6"/>
<dbReference type="OrthoDB" id="1424968at2759"/>
<dbReference type="Proteomes" id="UP000000763">
    <property type="component" value="Chromosome 4"/>
</dbReference>
<dbReference type="Proteomes" id="UP000007752">
    <property type="component" value="Chromosome 4"/>
</dbReference>
<dbReference type="Proteomes" id="UP000059680">
    <property type="component" value="Chromosome 4"/>
</dbReference>
<dbReference type="ExpressionAtlas" id="Q7XUV6">
    <property type="expression patterns" value="baseline and differential"/>
</dbReference>
<dbReference type="GO" id="GO:0005634">
    <property type="term" value="C:nucleus"/>
    <property type="evidence" value="ECO:0007669"/>
    <property type="project" value="UniProtKB-SubCell"/>
</dbReference>
<dbReference type="GO" id="GO:0003677">
    <property type="term" value="F:DNA binding"/>
    <property type="evidence" value="ECO:0007669"/>
    <property type="project" value="UniProtKB-KW"/>
</dbReference>
<dbReference type="GO" id="GO:0009738">
    <property type="term" value="P:abscisic acid-activated signaling pathway"/>
    <property type="evidence" value="ECO:0007669"/>
    <property type="project" value="UniProtKB-KW"/>
</dbReference>
<dbReference type="GO" id="GO:0009734">
    <property type="term" value="P:auxin-activated signaling pathway"/>
    <property type="evidence" value="ECO:0007669"/>
    <property type="project" value="UniProtKB-KW"/>
</dbReference>
<dbReference type="GO" id="GO:0009873">
    <property type="term" value="P:ethylene-activated signaling pathway"/>
    <property type="evidence" value="ECO:0007669"/>
    <property type="project" value="UniProtKB-KW"/>
</dbReference>
<dbReference type="GO" id="GO:0009740">
    <property type="term" value="P:gibberellic acid mediated signaling pathway"/>
    <property type="evidence" value="ECO:0007669"/>
    <property type="project" value="UniProtKB-KW"/>
</dbReference>
<dbReference type="GO" id="GO:0006355">
    <property type="term" value="P:regulation of DNA-templated transcription"/>
    <property type="evidence" value="ECO:0007669"/>
    <property type="project" value="InterPro"/>
</dbReference>
<dbReference type="FunFam" id="2.170.150.80:FF:000006">
    <property type="entry name" value="NAC domain-containing protein 100-like"/>
    <property type="match status" value="1"/>
</dbReference>
<dbReference type="Gene3D" id="2.170.150.80">
    <property type="entry name" value="NAC domain"/>
    <property type="match status" value="1"/>
</dbReference>
<dbReference type="InterPro" id="IPR003441">
    <property type="entry name" value="NAC-dom"/>
</dbReference>
<dbReference type="InterPro" id="IPR036093">
    <property type="entry name" value="NAC_dom_sf"/>
</dbReference>
<dbReference type="PANTHER" id="PTHR31744:SF219">
    <property type="entry name" value="NAC DOMAIN-CONTAINING PROTEIN 4"/>
    <property type="match status" value="1"/>
</dbReference>
<dbReference type="PANTHER" id="PTHR31744">
    <property type="entry name" value="PROTEIN CUP-SHAPED COTYLEDON 2-RELATED"/>
    <property type="match status" value="1"/>
</dbReference>
<dbReference type="Pfam" id="PF02365">
    <property type="entry name" value="NAM"/>
    <property type="match status" value="1"/>
</dbReference>
<dbReference type="SUPFAM" id="SSF101941">
    <property type="entry name" value="NAC domain"/>
    <property type="match status" value="1"/>
</dbReference>
<dbReference type="PROSITE" id="PS51005">
    <property type="entry name" value="NAC"/>
    <property type="match status" value="1"/>
</dbReference>
<sequence>MEQHQGQAGMDLPPGFRFHPTDEELITHYLAKKVADARFAALAVAEADLNKCEPWDLPSLAKMGEKEWYFFCLKDRKYPTGLRTNRATESGYWKATGKDKDIFRRKALVGMKKTLVFYTGRAPKGEKSGWVMHEYRLHGKLHAAALGFLHGKPASSKNEWVLCRVFKKSLVEVGAAGGKKAAVVTMEMARGGSTSSSVADEIAMSSVVLPPLMDMSGAGAGAVDPATTAHVTCFSNALEGQFFNPTAVHGHGGGDSSPFMASFTQYGQLHHGVSLVQLLESCNGYGGLVDMAASGSQLQPAACGGERERLSASQDTGLTSDVNPEISSSSGQKFDHEAALWGY</sequence>
<evidence type="ECO:0000255" key="1">
    <source>
        <dbReference type="PROSITE-ProRule" id="PRU00353"/>
    </source>
</evidence>
<evidence type="ECO:0000256" key="2">
    <source>
        <dbReference type="SAM" id="MobiDB-lite"/>
    </source>
</evidence>
<evidence type="ECO:0000269" key="3">
    <source>
    </source>
</evidence>
<evidence type="ECO:0000269" key="4">
    <source>
    </source>
</evidence>
<evidence type="ECO:0000269" key="5">
    <source>
    </source>
</evidence>
<evidence type="ECO:0000269" key="6">
    <source>
    </source>
</evidence>
<evidence type="ECO:0000269" key="7">
    <source>
    </source>
</evidence>
<evidence type="ECO:0000269" key="8">
    <source>
    </source>
</evidence>
<evidence type="ECO:0000269" key="9">
    <source>
    </source>
</evidence>
<evidence type="ECO:0000269" key="10">
    <source>
    </source>
</evidence>
<evidence type="ECO:0000303" key="11">
    <source>
    </source>
</evidence>
<evidence type="ECO:0000303" key="12">
    <source>
    </source>
</evidence>
<evidence type="ECO:0000305" key="13"/>
<evidence type="ECO:0000312" key="14">
    <source>
        <dbReference type="EMBL" id="BAS89546.1"/>
    </source>
</evidence>
<evidence type="ECO:0000312" key="15">
    <source>
        <dbReference type="EMBL" id="CAD40985.2"/>
    </source>
</evidence>
<evidence type="ECO:0000312" key="16">
    <source>
        <dbReference type="EMBL" id="EEE61128.1"/>
    </source>
</evidence>
<gene>
    <name evidence="12" type="primary">NAC4</name>
    <name evidence="11" type="synonym">NAC2</name>
    <name evidence="11" type="synonym">TIL1</name>
    <name evidence="14" type="ordered locus">Os04g0460600</name>
    <name evidence="13" type="ordered locus">LOC_Os04g38720</name>
    <name evidence="16" type="ORF">OsJ_15058</name>
    <name evidence="15" type="ORF">OSJNBa0072F16.10</name>
</gene>
<protein>
    <recommendedName>
        <fullName evidence="12">NAC domain-containing protein 4</fullName>
        <shortName evidence="12">ONAC004</shortName>
    </recommendedName>
    <alternativeName>
        <fullName evidence="11">OsNAC2</fullName>
    </alternativeName>
    <alternativeName>
        <fullName evidence="11">Protein TILLERING 1</fullName>
        <shortName evidence="11">OsTIL1</shortName>
    </alternativeName>
</protein>